<accession>Q5UQW6</accession>
<dbReference type="EMBL" id="AY653733">
    <property type="protein sequence ID" value="AAV50656.1"/>
    <property type="molecule type" value="Genomic_DNA"/>
</dbReference>
<dbReference type="SMR" id="Q5UQW6"/>
<dbReference type="KEGG" id="vg:9925009"/>
<dbReference type="Proteomes" id="UP000001134">
    <property type="component" value="Genome"/>
</dbReference>
<dbReference type="GO" id="GO:0033644">
    <property type="term" value="C:host cell membrane"/>
    <property type="evidence" value="ECO:0007669"/>
    <property type="project" value="UniProtKB-SubCell"/>
</dbReference>
<dbReference type="GO" id="GO:0016020">
    <property type="term" value="C:membrane"/>
    <property type="evidence" value="ECO:0007669"/>
    <property type="project" value="UniProtKB-KW"/>
</dbReference>
<dbReference type="GO" id="GO:0044423">
    <property type="term" value="C:virion component"/>
    <property type="evidence" value="ECO:0007669"/>
    <property type="project" value="UniProtKB-KW"/>
</dbReference>
<dbReference type="Gene3D" id="1.20.5.340">
    <property type="match status" value="1"/>
</dbReference>
<keyword id="KW-0175">Coiled coil</keyword>
<keyword id="KW-0325">Glycoprotein</keyword>
<keyword id="KW-1043">Host membrane</keyword>
<keyword id="KW-0472">Membrane</keyword>
<keyword id="KW-1185">Reference proteome</keyword>
<keyword id="KW-0735">Signal-anchor</keyword>
<keyword id="KW-0812">Transmembrane</keyword>
<keyword id="KW-1133">Transmembrane helix</keyword>
<keyword id="KW-0946">Virion</keyword>
<comment type="subcellular location">
    <subcellularLocation>
        <location evidence="3">Host membrane</location>
        <topology evidence="3">Single-pass type II membrane protein</topology>
    </subcellularLocation>
    <subcellularLocation>
        <location evidence="2">Virion</location>
    </subcellularLocation>
</comment>
<sequence length="265" mass="30067">MDKKTWVYIIIAIIIILLLVWYFRNHMSDQKGVNVNNQTYNMLQQQISSLNQQILFLKQQISNLHVPAPTSTVNSLRQTVSDINQQVSTINNQISSLNPYLPRNQQLELASVLSIFNRNALDLNNISRSVINRDINYFNAGQHGSQVPQNSHTVQNPNVADNELNVLQQKVDNLNGVVSNIRQHLAQFGSGIPESFRDEAEKAASYLNDRIDDINKNLPNLVQRLNPNQRNNLNRILSELNNDLSSLKNSLGSAVRNRINSVNIH</sequence>
<organismHost>
    <name type="scientific">Acanthamoeba polyphaga</name>
    <name type="common">Amoeba</name>
    <dbReference type="NCBI Taxonomy" id="5757"/>
</organismHost>
<reference key="1">
    <citation type="journal article" date="2004" name="Science">
        <title>The 1.2-megabase genome sequence of Mimivirus.</title>
        <authorList>
            <person name="Raoult D."/>
            <person name="Audic S."/>
            <person name="Robert C."/>
            <person name="Abergel C."/>
            <person name="Renesto P."/>
            <person name="Ogata H."/>
            <person name="La Scola B."/>
            <person name="Susan M."/>
            <person name="Claverie J.-M."/>
        </authorList>
    </citation>
    <scope>NUCLEOTIDE SEQUENCE [LARGE SCALE GENOMIC DNA]</scope>
    <source>
        <strain>Rowbotham-Bradford</strain>
    </source>
</reference>
<reference key="2">
    <citation type="journal article" date="2006" name="J. Virol.">
        <title>Mimivirus giant particles incorporate a large fraction of anonymous and unique gene products.</title>
        <authorList>
            <person name="Renesto P."/>
            <person name="Abergel C."/>
            <person name="Decloquement P."/>
            <person name="Moinier D."/>
            <person name="Azza S."/>
            <person name="Ogata H."/>
            <person name="Fourquet P."/>
            <person name="Gorvel J.-P."/>
            <person name="Claverie J.-M."/>
            <person name="Raoult D."/>
        </authorList>
    </citation>
    <scope>IDENTIFICATION BY MASS SPECTROMETRY [LARGE SCALE ANALYSIS]</scope>
    <scope>SUBCELLULAR LOCATION</scope>
</reference>
<gene>
    <name type="ordered locus">MIMI_R387</name>
</gene>
<feature type="chain" id="PRO_0000247398" description="Uncharacterized protein R387">
    <location>
        <begin position="1"/>
        <end position="265"/>
    </location>
</feature>
<feature type="transmembrane region" description="Helical; Signal-anchor for type II membrane protein" evidence="1">
    <location>
        <begin position="3"/>
        <end position="23"/>
    </location>
</feature>
<feature type="coiled-coil region" evidence="1">
    <location>
        <begin position="37"/>
        <end position="94"/>
    </location>
</feature>
<feature type="coiled-coil region" evidence="1">
    <location>
        <begin position="158"/>
        <end position="257"/>
    </location>
</feature>
<feature type="glycosylation site" description="N-linked (GlcNAc...) asparagine; by host" evidence="1">
    <location>
        <position position="37"/>
    </location>
</feature>
<feature type="glycosylation site" description="N-linked (GlcNAc...) asparagine; by host" evidence="1">
    <location>
        <position position="125"/>
    </location>
</feature>
<name>YR387_MIMIV</name>
<organism>
    <name type="scientific">Acanthamoeba polyphaga mimivirus</name>
    <name type="common">APMV</name>
    <dbReference type="NCBI Taxonomy" id="212035"/>
    <lineage>
        <taxon>Viruses</taxon>
        <taxon>Varidnaviria</taxon>
        <taxon>Bamfordvirae</taxon>
        <taxon>Nucleocytoviricota</taxon>
        <taxon>Megaviricetes</taxon>
        <taxon>Imitervirales</taxon>
        <taxon>Mimiviridae</taxon>
        <taxon>Megamimivirinae</taxon>
        <taxon>Mimivirus</taxon>
        <taxon>Mimivirus bradfordmassiliense</taxon>
    </lineage>
</organism>
<proteinExistence type="evidence at protein level"/>
<protein>
    <recommendedName>
        <fullName>Uncharacterized protein R387</fullName>
    </recommendedName>
</protein>
<evidence type="ECO:0000255" key="1"/>
<evidence type="ECO:0000269" key="2">
    <source>
    </source>
</evidence>
<evidence type="ECO:0000305" key="3"/>